<dbReference type="EMBL" id="CP000114">
    <property type="protein sequence ID" value="ABA46056.1"/>
    <property type="molecule type" value="Genomic_DNA"/>
</dbReference>
<dbReference type="RefSeq" id="WP_000981511.1">
    <property type="nucleotide sequence ID" value="NC_007432.1"/>
</dbReference>
<dbReference type="SMR" id="Q3JZD6"/>
<dbReference type="KEGG" id="sak:SAK_1770"/>
<dbReference type="HOGENOM" id="CLU_140930_1_1_9"/>
<dbReference type="GO" id="GO:0043590">
    <property type="term" value="C:bacterial nucleoid"/>
    <property type="evidence" value="ECO:0007669"/>
    <property type="project" value="UniProtKB-UniRule"/>
</dbReference>
<dbReference type="GO" id="GO:0005829">
    <property type="term" value="C:cytosol"/>
    <property type="evidence" value="ECO:0007669"/>
    <property type="project" value="TreeGrafter"/>
</dbReference>
<dbReference type="GO" id="GO:0003677">
    <property type="term" value="F:DNA binding"/>
    <property type="evidence" value="ECO:0007669"/>
    <property type="project" value="UniProtKB-UniRule"/>
</dbReference>
<dbReference type="Gene3D" id="3.30.1310.10">
    <property type="entry name" value="Nucleoid-associated protein YbaB-like domain"/>
    <property type="match status" value="1"/>
</dbReference>
<dbReference type="HAMAP" id="MF_00274">
    <property type="entry name" value="DNA_YbaB_EbfC"/>
    <property type="match status" value="1"/>
</dbReference>
<dbReference type="InterPro" id="IPR036894">
    <property type="entry name" value="YbaB-like_sf"/>
</dbReference>
<dbReference type="InterPro" id="IPR004401">
    <property type="entry name" value="YbaB/EbfC"/>
</dbReference>
<dbReference type="NCBIfam" id="TIGR00103">
    <property type="entry name" value="DNA_YbaB_EbfC"/>
    <property type="match status" value="1"/>
</dbReference>
<dbReference type="PANTHER" id="PTHR33449">
    <property type="entry name" value="NUCLEOID-ASSOCIATED PROTEIN YBAB"/>
    <property type="match status" value="1"/>
</dbReference>
<dbReference type="PANTHER" id="PTHR33449:SF1">
    <property type="entry name" value="NUCLEOID-ASSOCIATED PROTEIN YBAB"/>
    <property type="match status" value="1"/>
</dbReference>
<dbReference type="Pfam" id="PF02575">
    <property type="entry name" value="YbaB_DNA_bd"/>
    <property type="match status" value="1"/>
</dbReference>
<dbReference type="PIRSF" id="PIRSF004555">
    <property type="entry name" value="UCP004555"/>
    <property type="match status" value="1"/>
</dbReference>
<dbReference type="SUPFAM" id="SSF82607">
    <property type="entry name" value="YbaB-like"/>
    <property type="match status" value="1"/>
</dbReference>
<proteinExistence type="inferred from homology"/>
<organism>
    <name type="scientific">Streptococcus agalactiae serotype Ia (strain ATCC 27591 / A909 / CDC SS700)</name>
    <dbReference type="NCBI Taxonomy" id="205921"/>
    <lineage>
        <taxon>Bacteria</taxon>
        <taxon>Bacillati</taxon>
        <taxon>Bacillota</taxon>
        <taxon>Bacilli</taxon>
        <taxon>Lactobacillales</taxon>
        <taxon>Streptococcaceae</taxon>
        <taxon>Streptococcus</taxon>
    </lineage>
</organism>
<protein>
    <recommendedName>
        <fullName evidence="1">Nucleoid-associated protein SAK_1770</fullName>
    </recommendedName>
</protein>
<reference key="1">
    <citation type="journal article" date="2005" name="Proc. Natl. Acad. Sci. U.S.A.">
        <title>Genome analysis of multiple pathogenic isolates of Streptococcus agalactiae: implications for the microbial 'pan-genome'.</title>
        <authorList>
            <person name="Tettelin H."/>
            <person name="Masignani V."/>
            <person name="Cieslewicz M.J."/>
            <person name="Donati C."/>
            <person name="Medini D."/>
            <person name="Ward N.L."/>
            <person name="Angiuoli S.V."/>
            <person name="Crabtree J."/>
            <person name="Jones A.L."/>
            <person name="Durkin A.S."/>
            <person name="DeBoy R.T."/>
            <person name="Davidsen T.M."/>
            <person name="Mora M."/>
            <person name="Scarselli M."/>
            <person name="Margarit y Ros I."/>
            <person name="Peterson J.D."/>
            <person name="Hauser C.R."/>
            <person name="Sundaram J.P."/>
            <person name="Nelson W.C."/>
            <person name="Madupu R."/>
            <person name="Brinkac L.M."/>
            <person name="Dodson R.J."/>
            <person name="Rosovitz M.J."/>
            <person name="Sullivan S.A."/>
            <person name="Daugherty S.C."/>
            <person name="Haft D.H."/>
            <person name="Selengut J."/>
            <person name="Gwinn M.L."/>
            <person name="Zhou L."/>
            <person name="Zafar N."/>
            <person name="Khouri H."/>
            <person name="Radune D."/>
            <person name="Dimitrov G."/>
            <person name="Watkins K."/>
            <person name="O'Connor K.J."/>
            <person name="Smith S."/>
            <person name="Utterback T.R."/>
            <person name="White O."/>
            <person name="Rubens C.E."/>
            <person name="Grandi G."/>
            <person name="Madoff L.C."/>
            <person name="Kasper D.L."/>
            <person name="Telford J.L."/>
            <person name="Wessels M.R."/>
            <person name="Rappuoli R."/>
            <person name="Fraser C.M."/>
        </authorList>
    </citation>
    <scope>NUCLEOTIDE SEQUENCE [LARGE SCALE GENOMIC DNA]</scope>
    <source>
        <strain>ATCC 27591 / A909 / CDC SS700</strain>
    </source>
</reference>
<comment type="function">
    <text evidence="1">Binds to DNA and alters its conformation. May be involved in regulation of gene expression, nucleoid organization and DNA protection.</text>
</comment>
<comment type="subunit">
    <text evidence="1">Homodimer.</text>
</comment>
<comment type="subcellular location">
    <subcellularLocation>
        <location evidence="1">Cytoplasm</location>
        <location evidence="1">Nucleoid</location>
    </subcellularLocation>
</comment>
<comment type="similarity">
    <text evidence="1">Belongs to the YbaB/EbfC family.</text>
</comment>
<keyword id="KW-0963">Cytoplasm</keyword>
<keyword id="KW-0238">DNA-binding</keyword>
<gene>
    <name type="ordered locus">SAK_1770</name>
</gene>
<feature type="chain" id="PRO_1000003836" description="Nucleoid-associated protein SAK_1770">
    <location>
        <begin position="1"/>
        <end position="99"/>
    </location>
</feature>
<feature type="region of interest" description="Disordered" evidence="2">
    <location>
        <begin position="1"/>
        <end position="20"/>
    </location>
</feature>
<feature type="compositionally biased region" description="Low complexity" evidence="2">
    <location>
        <begin position="1"/>
        <end position="10"/>
    </location>
</feature>
<sequence>MMNMQNMMRQAQKLQKQMEQKQADLAASQFTGKSAQELVTVTFTGDKKLISIDYKEAVVDPEDIETLQDMTTQAINDALSQVDDATKKIMGAFAGKMPF</sequence>
<accession>Q3JZD6</accession>
<name>Y1770_STRA1</name>
<evidence type="ECO:0000255" key="1">
    <source>
        <dbReference type="HAMAP-Rule" id="MF_00274"/>
    </source>
</evidence>
<evidence type="ECO:0000256" key="2">
    <source>
        <dbReference type="SAM" id="MobiDB-lite"/>
    </source>
</evidence>